<feature type="chain" id="PRO_0000174456" description="S-adenosylmethionine synthase 1">
    <location>
        <begin position="1"/>
        <end position="393"/>
    </location>
</feature>
<feature type="binding site" evidence="2">
    <location>
        <position position="9"/>
    </location>
    <ligand>
        <name>Mg(2+)</name>
        <dbReference type="ChEBI" id="CHEBI:18420"/>
    </ligand>
</feature>
<feature type="binding site" description="in other chain" evidence="3">
    <location>
        <position position="15"/>
    </location>
    <ligand>
        <name>ATP</name>
        <dbReference type="ChEBI" id="CHEBI:30616"/>
        <note>ligand shared between two neighboring subunits</note>
    </ligand>
</feature>
<feature type="binding site" evidence="1">
    <location>
        <position position="43"/>
    </location>
    <ligand>
        <name>K(+)</name>
        <dbReference type="ChEBI" id="CHEBI:29103"/>
    </ligand>
</feature>
<feature type="binding site" description="in other chain" evidence="1">
    <location>
        <position position="56"/>
    </location>
    <ligand>
        <name>L-methionine</name>
        <dbReference type="ChEBI" id="CHEBI:57844"/>
        <note>ligand shared between two neighboring subunits</note>
    </ligand>
</feature>
<feature type="binding site" description="in other chain" evidence="1">
    <location>
        <position position="99"/>
    </location>
    <ligand>
        <name>L-methionine</name>
        <dbReference type="ChEBI" id="CHEBI:57844"/>
        <note>ligand shared between two neighboring subunits</note>
    </ligand>
</feature>
<feature type="binding site" description="in other chain" evidence="3">
    <location>
        <begin position="167"/>
        <end position="169"/>
    </location>
    <ligand>
        <name>ATP</name>
        <dbReference type="ChEBI" id="CHEBI:30616"/>
        <note>ligand shared between two neighboring subunits</note>
    </ligand>
</feature>
<feature type="binding site" description="in other chain" evidence="3">
    <location>
        <begin position="235"/>
        <end position="238"/>
    </location>
    <ligand>
        <name>ATP</name>
        <dbReference type="ChEBI" id="CHEBI:30616"/>
        <note>ligand shared between two neighboring subunits</note>
    </ligand>
</feature>
<feature type="binding site" description="in other chain" evidence="3">
    <location>
        <position position="246"/>
    </location>
    <ligand>
        <name>ATP</name>
        <dbReference type="ChEBI" id="CHEBI:30616"/>
        <note>ligand shared between two neighboring subunits</note>
    </ligand>
</feature>
<feature type="binding site" evidence="1">
    <location>
        <position position="246"/>
    </location>
    <ligand>
        <name>L-methionine</name>
        <dbReference type="ChEBI" id="CHEBI:57844"/>
        <note>ligand shared between two neighboring subunits</note>
    </ligand>
</feature>
<feature type="binding site" description="in other chain" evidence="1">
    <location>
        <begin position="252"/>
        <end position="253"/>
    </location>
    <ligand>
        <name>ATP</name>
        <dbReference type="ChEBI" id="CHEBI:30616"/>
        <note>ligand shared between two neighboring subunits</note>
    </ligand>
</feature>
<feature type="binding site" evidence="1">
    <location>
        <position position="269"/>
    </location>
    <ligand>
        <name>ATP</name>
        <dbReference type="ChEBI" id="CHEBI:30616"/>
        <note>ligand shared between two neighboring subunits</note>
    </ligand>
</feature>
<feature type="binding site" evidence="1">
    <location>
        <position position="273"/>
    </location>
    <ligand>
        <name>ATP</name>
        <dbReference type="ChEBI" id="CHEBI:30616"/>
        <note>ligand shared between two neighboring subunits</note>
    </ligand>
</feature>
<feature type="binding site" evidence="2">
    <location>
        <position position="277"/>
    </location>
    <ligand>
        <name>ATP</name>
        <dbReference type="ChEBI" id="CHEBI:30616"/>
        <note>ligand shared between two neighboring subunits</note>
    </ligand>
</feature>
<feature type="binding site" description="in other chain" evidence="1">
    <location>
        <position position="277"/>
    </location>
    <ligand>
        <name>L-methionine</name>
        <dbReference type="ChEBI" id="CHEBI:57844"/>
        <note>ligand shared between two neighboring subunits</note>
    </ligand>
</feature>
<feature type="modified residue" description="S-nitrosocysteine" evidence="6">
    <location>
        <position position="114"/>
    </location>
</feature>
<feature type="mutagenesis site" description="Loss of the NO-mediated inhibition by S-nitrosylation." evidence="6">
    <original>C</original>
    <variation>R</variation>
    <location>
        <position position="114"/>
    </location>
</feature>
<feature type="sequence conflict" description="In Ref. 1; AAA32868." evidence="9" ref="1">
    <original>E</original>
    <variation>D</variation>
    <location>
        <position position="117"/>
    </location>
</feature>
<feature type="strand" evidence="11">
    <location>
        <begin position="4"/>
        <end position="11"/>
    </location>
</feature>
<feature type="helix" evidence="11">
    <location>
        <begin position="16"/>
        <end position="34"/>
    </location>
</feature>
<feature type="strand" evidence="11">
    <location>
        <begin position="39"/>
        <end position="47"/>
    </location>
</feature>
<feature type="strand" evidence="11">
    <location>
        <begin position="50"/>
        <end position="58"/>
    </location>
</feature>
<feature type="helix" evidence="11">
    <location>
        <begin position="65"/>
        <end position="76"/>
    </location>
</feature>
<feature type="helix" evidence="11">
    <location>
        <begin position="81"/>
        <end position="83"/>
    </location>
</feature>
<feature type="turn" evidence="11">
    <location>
        <begin position="87"/>
        <end position="89"/>
    </location>
</feature>
<feature type="strand" evidence="11">
    <location>
        <begin position="90"/>
        <end position="99"/>
    </location>
</feature>
<feature type="turn" evidence="11">
    <location>
        <begin position="115"/>
        <end position="117"/>
    </location>
</feature>
<feature type="strand" evidence="11">
    <location>
        <begin position="120"/>
        <end position="122"/>
    </location>
</feature>
<feature type="strand" evidence="11">
    <location>
        <begin position="124"/>
        <end position="131"/>
    </location>
</feature>
<feature type="helix" evidence="11">
    <location>
        <begin position="140"/>
        <end position="157"/>
    </location>
</feature>
<feature type="turn" evidence="11">
    <location>
        <begin position="160"/>
        <end position="163"/>
    </location>
</feature>
<feature type="strand" evidence="11">
    <location>
        <begin position="164"/>
        <end position="179"/>
    </location>
</feature>
<feature type="strand" evidence="11">
    <location>
        <begin position="182"/>
        <end position="197"/>
    </location>
</feature>
<feature type="strand" evidence="11">
    <location>
        <begin position="199"/>
        <end position="201"/>
    </location>
</feature>
<feature type="helix" evidence="11">
    <location>
        <begin position="203"/>
        <end position="213"/>
    </location>
</feature>
<feature type="helix" evidence="11">
    <location>
        <begin position="215"/>
        <end position="218"/>
    </location>
</feature>
<feature type="helix" evidence="11">
    <location>
        <begin position="221"/>
        <end position="223"/>
    </location>
</feature>
<feature type="strand" evidence="11">
    <location>
        <begin position="229"/>
        <end position="233"/>
    </location>
</feature>
<feature type="turn" evidence="11">
    <location>
        <begin position="242"/>
        <end position="245"/>
    </location>
</feature>
<feature type="turn" evidence="11">
    <location>
        <begin position="254"/>
        <end position="261"/>
    </location>
</feature>
<feature type="helix" evidence="11">
    <location>
        <begin position="278"/>
        <end position="295"/>
    </location>
</feature>
<feature type="strand" evidence="11">
    <location>
        <begin position="300"/>
        <end position="308"/>
    </location>
</feature>
<feature type="strand" evidence="11">
    <location>
        <begin position="316"/>
        <end position="321"/>
    </location>
</feature>
<feature type="helix" evidence="11">
    <location>
        <begin position="330"/>
        <end position="340"/>
    </location>
</feature>
<feature type="helix" evidence="11">
    <location>
        <begin position="345"/>
        <end position="351"/>
    </location>
</feature>
<feature type="turn" evidence="11">
    <location>
        <begin position="352"/>
        <end position="355"/>
    </location>
</feature>
<feature type="helix" evidence="11">
    <location>
        <begin position="361"/>
        <end position="365"/>
    </location>
</feature>
<feature type="strand" evidence="11">
    <location>
        <begin position="370"/>
        <end position="372"/>
    </location>
</feature>
<feature type="helix" evidence="11">
    <location>
        <begin position="379"/>
        <end position="381"/>
    </location>
</feature>
<comment type="function">
    <text evidence="6">Catalyzes the formation of S-adenosylmethionine from methionine and ATP. The reaction comprises two steps that are both catalyzed by the same enzyme: formation of S-adenosylmethionine (AdoMet) and triphosphate, and subsequent hydrolysis of the triphosphate.</text>
</comment>
<comment type="catalytic activity">
    <reaction evidence="6">
        <text>L-methionine + ATP + H2O = S-adenosyl-L-methionine + phosphate + diphosphate</text>
        <dbReference type="Rhea" id="RHEA:21080"/>
        <dbReference type="ChEBI" id="CHEBI:15377"/>
        <dbReference type="ChEBI" id="CHEBI:30616"/>
        <dbReference type="ChEBI" id="CHEBI:33019"/>
        <dbReference type="ChEBI" id="CHEBI:43474"/>
        <dbReference type="ChEBI" id="CHEBI:57844"/>
        <dbReference type="ChEBI" id="CHEBI:59789"/>
        <dbReference type="EC" id="2.5.1.6"/>
    </reaction>
</comment>
<comment type="cofactor">
    <cofactor evidence="4">
        <name>Mn(2+)</name>
        <dbReference type="ChEBI" id="CHEBI:29035"/>
    </cofactor>
    <cofactor evidence="10">
        <name>Mg(2+)</name>
        <dbReference type="ChEBI" id="CHEBI:18420"/>
    </cofactor>
    <cofactor evidence="4">
        <name>Co(2+)</name>
        <dbReference type="ChEBI" id="CHEBI:48828"/>
    </cofactor>
    <text evidence="2 4">Binds 2 divalent ions per subunit. The metal ions interact primarily with the substrate (By similarity). Can utilize magnesium, manganese or cobalt (in vitro) (By similarity).</text>
</comment>
<comment type="cofactor">
    <cofactor evidence="10">
        <name>K(+)</name>
        <dbReference type="ChEBI" id="CHEBI:29103"/>
    </cofactor>
    <text evidence="2">Binds 1 potassium ion per subunit. The potassium ion interacts primarily with the substrate (By similarity).</text>
</comment>
<comment type="activity regulation">
    <text evidence="6">Reversibly inhibited by NO. Inhibited by 5,5'-dithiobis-2-nitrobenzoic acid (DTNB) and N-ethylmaleimide (NEM) (in vitro).</text>
</comment>
<comment type="pathway">
    <text evidence="6">Amino-acid biosynthesis; S-adenosyl-L-methionine biosynthesis; S-adenosyl-L-methionine from L-methionine: step 1/1.</text>
</comment>
<comment type="subunit">
    <text evidence="3 7">Homotetramer (By similarity). Interacts with GRF3.</text>
</comment>
<comment type="subcellular location">
    <subcellularLocation>
        <location evidence="5">Cytoplasm</location>
    </subcellularLocation>
</comment>
<comment type="tissue specificity">
    <text evidence="8">Highly expressed in stems and roots.</text>
</comment>
<comment type="PTM">
    <text evidence="6">S-nitrosylated in the presence of NO. The inhibition of SAM1 activity by S-nitrosylation could contribute to the cross-talk between ethylene and NO signaling.</text>
</comment>
<comment type="similarity">
    <text evidence="9">Belongs to the AdoMet synthase family.</text>
</comment>
<comment type="sequence caution" evidence="9">
    <conflict type="frameshift">
        <sequence resource="EMBL-CDS" id="AAK96504"/>
    </conflict>
</comment>
<comment type="sequence caution" evidence="9">
    <conflict type="frameshift">
        <sequence resource="EMBL-CDS" id="AAL31222"/>
    </conflict>
</comment>
<reference key="1">
    <citation type="journal article" date="1989" name="Plant Cell">
        <title>Strong cellular preference in the expression of a housekeeping gene of Arabidopsis thaliana encoding S-adenosylmethionine synthetase.</title>
        <authorList>
            <person name="Peleman J."/>
            <person name="Boerjan W."/>
            <person name="Engler G."/>
            <person name="Seurinck J."/>
            <person name="Botterman J."/>
            <person name="Alliotte T."/>
            <person name="van Montagu M."/>
            <person name="Inze D."/>
        </authorList>
    </citation>
    <scope>NUCLEOTIDE SEQUENCE [GENOMIC DNA]</scope>
</reference>
<reference key="2">
    <citation type="journal article" date="2000" name="Nature">
        <title>Sequence and analysis of chromosome 1 of the plant Arabidopsis thaliana.</title>
        <authorList>
            <person name="Theologis A."/>
            <person name="Ecker J.R."/>
            <person name="Palm C.J."/>
            <person name="Federspiel N.A."/>
            <person name="Kaul S."/>
            <person name="White O."/>
            <person name="Alonso J."/>
            <person name="Altafi H."/>
            <person name="Araujo R."/>
            <person name="Bowman C.L."/>
            <person name="Brooks S.Y."/>
            <person name="Buehler E."/>
            <person name="Chan A."/>
            <person name="Chao Q."/>
            <person name="Chen H."/>
            <person name="Cheuk R.F."/>
            <person name="Chin C.W."/>
            <person name="Chung M.K."/>
            <person name="Conn L."/>
            <person name="Conway A.B."/>
            <person name="Conway A.R."/>
            <person name="Creasy T.H."/>
            <person name="Dewar K."/>
            <person name="Dunn P."/>
            <person name="Etgu P."/>
            <person name="Feldblyum T.V."/>
            <person name="Feng J.-D."/>
            <person name="Fong B."/>
            <person name="Fujii C.Y."/>
            <person name="Gill J.E."/>
            <person name="Goldsmith A.D."/>
            <person name="Haas B."/>
            <person name="Hansen N.F."/>
            <person name="Hughes B."/>
            <person name="Huizar L."/>
            <person name="Hunter J.L."/>
            <person name="Jenkins J."/>
            <person name="Johnson-Hopson C."/>
            <person name="Khan S."/>
            <person name="Khaykin E."/>
            <person name="Kim C.J."/>
            <person name="Koo H.L."/>
            <person name="Kremenetskaia I."/>
            <person name="Kurtz D.B."/>
            <person name="Kwan A."/>
            <person name="Lam B."/>
            <person name="Langin-Hooper S."/>
            <person name="Lee A."/>
            <person name="Lee J.M."/>
            <person name="Lenz C.A."/>
            <person name="Li J.H."/>
            <person name="Li Y.-P."/>
            <person name="Lin X."/>
            <person name="Liu S.X."/>
            <person name="Liu Z.A."/>
            <person name="Luros J.S."/>
            <person name="Maiti R."/>
            <person name="Marziali A."/>
            <person name="Militscher J."/>
            <person name="Miranda M."/>
            <person name="Nguyen M."/>
            <person name="Nierman W.C."/>
            <person name="Osborne B.I."/>
            <person name="Pai G."/>
            <person name="Peterson J."/>
            <person name="Pham P.K."/>
            <person name="Rizzo M."/>
            <person name="Rooney T."/>
            <person name="Rowley D."/>
            <person name="Sakano H."/>
            <person name="Salzberg S.L."/>
            <person name="Schwartz J.R."/>
            <person name="Shinn P."/>
            <person name="Southwick A.M."/>
            <person name="Sun H."/>
            <person name="Tallon L.J."/>
            <person name="Tambunga G."/>
            <person name="Toriumi M.J."/>
            <person name="Town C.D."/>
            <person name="Utterback T."/>
            <person name="Van Aken S."/>
            <person name="Vaysberg M."/>
            <person name="Vysotskaia V.S."/>
            <person name="Walker M."/>
            <person name="Wu D."/>
            <person name="Yu G."/>
            <person name="Fraser C.M."/>
            <person name="Venter J.C."/>
            <person name="Davis R.W."/>
        </authorList>
    </citation>
    <scope>NUCLEOTIDE SEQUENCE [LARGE SCALE GENOMIC DNA]</scope>
    <source>
        <strain>cv. Columbia</strain>
    </source>
</reference>
<reference key="3">
    <citation type="journal article" date="2017" name="Plant J.">
        <title>Araport11: a complete reannotation of the Arabidopsis thaliana reference genome.</title>
        <authorList>
            <person name="Cheng C.Y."/>
            <person name="Krishnakumar V."/>
            <person name="Chan A.P."/>
            <person name="Thibaud-Nissen F."/>
            <person name="Schobel S."/>
            <person name="Town C.D."/>
        </authorList>
    </citation>
    <scope>GENOME REANNOTATION</scope>
    <source>
        <strain>cv. Columbia</strain>
    </source>
</reference>
<reference key="4">
    <citation type="journal article" date="2003" name="Science">
        <title>Empirical analysis of transcriptional activity in the Arabidopsis genome.</title>
        <authorList>
            <person name="Yamada K."/>
            <person name="Lim J."/>
            <person name="Dale J.M."/>
            <person name="Chen H."/>
            <person name="Shinn P."/>
            <person name="Palm C.J."/>
            <person name="Southwick A.M."/>
            <person name="Wu H.C."/>
            <person name="Kim C.J."/>
            <person name="Nguyen M."/>
            <person name="Pham P.K."/>
            <person name="Cheuk R.F."/>
            <person name="Karlin-Newmann G."/>
            <person name="Liu S.X."/>
            <person name="Lam B."/>
            <person name="Sakano H."/>
            <person name="Wu T."/>
            <person name="Yu G."/>
            <person name="Miranda M."/>
            <person name="Quach H.L."/>
            <person name="Tripp M."/>
            <person name="Chang C.H."/>
            <person name="Lee J.M."/>
            <person name="Toriumi M.J."/>
            <person name="Chan M.M."/>
            <person name="Tang C.C."/>
            <person name="Onodera C.S."/>
            <person name="Deng J.M."/>
            <person name="Akiyama K."/>
            <person name="Ansari Y."/>
            <person name="Arakawa T."/>
            <person name="Banh J."/>
            <person name="Banno F."/>
            <person name="Bowser L."/>
            <person name="Brooks S.Y."/>
            <person name="Carninci P."/>
            <person name="Chao Q."/>
            <person name="Choy N."/>
            <person name="Enju A."/>
            <person name="Goldsmith A.D."/>
            <person name="Gurjal M."/>
            <person name="Hansen N.F."/>
            <person name="Hayashizaki Y."/>
            <person name="Johnson-Hopson C."/>
            <person name="Hsuan V.W."/>
            <person name="Iida K."/>
            <person name="Karnes M."/>
            <person name="Khan S."/>
            <person name="Koesema E."/>
            <person name="Ishida J."/>
            <person name="Jiang P.X."/>
            <person name="Jones T."/>
            <person name="Kawai J."/>
            <person name="Kamiya A."/>
            <person name="Meyers C."/>
            <person name="Nakajima M."/>
            <person name="Narusaka M."/>
            <person name="Seki M."/>
            <person name="Sakurai T."/>
            <person name="Satou M."/>
            <person name="Tamse R."/>
            <person name="Vaysberg M."/>
            <person name="Wallender E.K."/>
            <person name="Wong C."/>
            <person name="Yamamura Y."/>
            <person name="Yuan S."/>
            <person name="Shinozaki K."/>
            <person name="Davis R.W."/>
            <person name="Theologis A."/>
            <person name="Ecker J.R."/>
        </authorList>
    </citation>
    <scope>NUCLEOTIDE SEQUENCE [LARGE SCALE MRNA]</scope>
    <source>
        <strain>cv. Columbia</strain>
    </source>
</reference>
<reference key="5">
    <citation type="submission" date="2002-03" db="EMBL/GenBank/DDBJ databases">
        <title>Full-length cDNA from Arabidopsis thaliana.</title>
        <authorList>
            <person name="Brover V.V."/>
            <person name="Troukhan M.E."/>
            <person name="Alexandrov N.A."/>
            <person name="Lu Y.-P."/>
            <person name="Flavell R.B."/>
            <person name="Feldmann K.A."/>
        </authorList>
    </citation>
    <scope>NUCLEOTIDE SEQUENCE [LARGE SCALE MRNA]</scope>
</reference>
<reference key="6">
    <citation type="journal article" date="1993" name="Plant J.">
        <title>An inventory of 1152 expressed sequence tags obtained by partial sequencing of cDNAs from Arabidopsis thaliana.</title>
        <authorList>
            <person name="Hoefte H."/>
            <person name="Desprez T."/>
            <person name="Amselem J."/>
            <person name="Chiapello H."/>
            <person name="Rouze P."/>
            <person name="Caboche M."/>
            <person name="Moisan A."/>
            <person name="Jourjon M.-F."/>
            <person name="Charpenteau J.-L."/>
            <person name="Berthomieu P."/>
            <person name="Guerrier D."/>
            <person name="Giraudat J."/>
            <person name="Quigley F."/>
            <person name="Thomas F."/>
            <person name="Yu D.-Y."/>
            <person name="Mache R."/>
            <person name="Raynal M."/>
            <person name="Cooke R."/>
            <person name="Grellet F."/>
            <person name="Delseny M."/>
            <person name="Parmentier Y."/>
            <person name="de Marcillac G."/>
            <person name="Gigot C."/>
            <person name="Fleck J."/>
            <person name="Philipps G."/>
            <person name="Axelos M."/>
            <person name="Bardet C."/>
            <person name="Tremousaygue D."/>
            <person name="Lescure B."/>
        </authorList>
    </citation>
    <scope>NUCLEOTIDE SEQUENCE [LARGE SCALE MRNA] OF 1-116 AND 363-393</scope>
    <source>
        <strain>cv. Columbia</strain>
        <tissue>Green siliques</tissue>
    </source>
</reference>
<reference key="7">
    <citation type="journal article" date="1989" name="Gene">
        <title>Structure and expression analyses of the S-adenosylmethionine synthetase gene family in Arabidopsis thaliana.</title>
        <authorList>
            <person name="Peleman J."/>
            <person name="Saito K."/>
            <person name="Cottyn B."/>
            <person name="Engler G."/>
            <person name="Seurinck J."/>
            <person name="van Montagu M."/>
            <person name="Inze D."/>
        </authorList>
    </citation>
    <scope>TISSUE SPECIFICITY</scope>
    <source>
        <strain>cv. Columbia</strain>
    </source>
</reference>
<reference key="8">
    <citation type="journal article" date="2006" name="J. Biol. Chem.">
        <title>Differential inhibition of Arabidopsis methionine adenosyltransferases by protein S-nitrosylation.</title>
        <authorList>
            <person name="Lindermayr C."/>
            <person name="Saalbach G."/>
            <person name="Bahnweg G."/>
            <person name="Durner J."/>
        </authorList>
    </citation>
    <scope>FUNCTION</scope>
    <scope>CATALYTIC ACTIVITY</scope>
    <scope>COFACTOR</scope>
    <scope>S-NITROSYLATION AT CYS-114</scope>
    <scope>MUTAGENESIS OF CYS-114</scope>
    <scope>ACTIVITY REGULATION</scope>
    <scope>PATHWAY</scope>
</reference>
<reference key="9">
    <citation type="journal article" date="2011" name="FEBS Lett.">
        <title>14-3-3 proteins fine-tune plant nutrient metabolism.</title>
        <authorList>
            <person name="Shin R."/>
            <person name="Jez J.M."/>
            <person name="Basra A."/>
            <person name="Zhang B."/>
            <person name="Schachtman D.P."/>
        </authorList>
    </citation>
    <scope>INTERACTION WITH GRF3</scope>
</reference>
<protein>
    <recommendedName>
        <fullName>S-adenosylmethionine synthase 1</fullName>
        <shortName>AdoMet synthase 1</shortName>
        <ecNumber evidence="6">2.5.1.6</ecNumber>
    </recommendedName>
    <alternativeName>
        <fullName>Methionine adenosyltransferase 1</fullName>
        <shortName>MAT 1</shortName>
    </alternativeName>
</protein>
<organism>
    <name type="scientific">Arabidopsis thaliana</name>
    <name type="common">Mouse-ear cress</name>
    <dbReference type="NCBI Taxonomy" id="3702"/>
    <lineage>
        <taxon>Eukaryota</taxon>
        <taxon>Viridiplantae</taxon>
        <taxon>Streptophyta</taxon>
        <taxon>Embryophyta</taxon>
        <taxon>Tracheophyta</taxon>
        <taxon>Spermatophyta</taxon>
        <taxon>Magnoliopsida</taxon>
        <taxon>eudicotyledons</taxon>
        <taxon>Gunneridae</taxon>
        <taxon>Pentapetalae</taxon>
        <taxon>rosids</taxon>
        <taxon>malvids</taxon>
        <taxon>Brassicales</taxon>
        <taxon>Brassicaceae</taxon>
        <taxon>Camelineae</taxon>
        <taxon>Arabidopsis</taxon>
    </lineage>
</organism>
<keyword id="KW-0002">3D-structure</keyword>
<keyword id="KW-0067">ATP-binding</keyword>
<keyword id="KW-0170">Cobalt</keyword>
<keyword id="KW-0963">Cytoplasm</keyword>
<keyword id="KW-0460">Magnesium</keyword>
<keyword id="KW-0479">Metal-binding</keyword>
<keyword id="KW-0547">Nucleotide-binding</keyword>
<keyword id="KW-0554">One-carbon metabolism</keyword>
<keyword id="KW-0630">Potassium</keyword>
<keyword id="KW-1185">Reference proteome</keyword>
<keyword id="KW-0702">S-nitrosylation</keyword>
<keyword id="KW-0808">Transferase</keyword>
<gene>
    <name type="primary">SAM1</name>
    <name type="ordered locus">At1g02500</name>
    <name type="ORF">T14P4.17</name>
    <name type="ORF">T14P4_22</name>
</gene>
<proteinExistence type="evidence at protein level"/>
<accession>P23686</accession>
<accession>Q941A8</accession>
<accession>Q9FEE0</accession>
<sequence>METFLFTSESVNEGHPDKLCDQISDAVLDACLEQDPDSKVACETCTKTNMVMVFGEITTKATVDYEKIVRDTCRAIGFVSDDVGLDADKCKVLVNIEQQSPDIAQGVHGHFTKCPEEIGAGDQGHMFGYATDETPELMPLSHVLATKLGARLTEVRKNGTCAWLRPDGKTQVTVEYYNDKGAMVPIRVHTVLISTQHDETVTNDEIARDLKEHVIKPVIPEKYLDEKTIFHLNPSGRFVIGGPHGDAGLTGRKIIIDTYGGWGAHGGGAFSGKDPTKVDRSGAYIVRQAAKSVVANGMARRALVQVSYAIGVPEPLSVFVDTYETGLIPDKEILKIVKESFDFRPGMMTINLDLKRGGNGRFLKTAAYGHFGRDDPDFTWEVVKPLKWDKPQA</sequence>
<name>METK1_ARATH</name>
<evidence type="ECO:0000250" key="1">
    <source>
        <dbReference type="UniProtKB" id="P0A817"/>
    </source>
</evidence>
<evidence type="ECO:0000250" key="2">
    <source>
        <dbReference type="UniProtKB" id="P13444"/>
    </source>
</evidence>
<evidence type="ECO:0000250" key="3">
    <source>
        <dbReference type="UniProtKB" id="Q00266"/>
    </source>
</evidence>
<evidence type="ECO:0000250" key="4">
    <source>
        <dbReference type="UniProtKB" id="Q96551"/>
    </source>
</evidence>
<evidence type="ECO:0000250" key="5">
    <source>
        <dbReference type="UniProtKB" id="Q9LUT2"/>
    </source>
</evidence>
<evidence type="ECO:0000269" key="6">
    <source>
    </source>
</evidence>
<evidence type="ECO:0000269" key="7">
    <source>
    </source>
</evidence>
<evidence type="ECO:0000269" key="8">
    <source>
    </source>
</evidence>
<evidence type="ECO:0000305" key="9"/>
<evidence type="ECO:0000305" key="10">
    <source>
    </source>
</evidence>
<evidence type="ECO:0007829" key="11">
    <source>
        <dbReference type="PDB" id="6VCX"/>
    </source>
</evidence>
<dbReference type="EC" id="2.5.1.6" evidence="6"/>
<dbReference type="EMBL" id="M55077">
    <property type="protein sequence ID" value="AAA32868.1"/>
    <property type="molecule type" value="Genomic_DNA"/>
</dbReference>
<dbReference type="EMBL" id="AC022521">
    <property type="protein sequence ID" value="AAG10639.1"/>
    <property type="molecule type" value="Genomic_DNA"/>
</dbReference>
<dbReference type="EMBL" id="CP002684">
    <property type="protein sequence ID" value="AEE27437.1"/>
    <property type="molecule type" value="Genomic_DNA"/>
</dbReference>
<dbReference type="EMBL" id="CP002684">
    <property type="protein sequence ID" value="AEE27438.1"/>
    <property type="molecule type" value="Genomic_DNA"/>
</dbReference>
<dbReference type="EMBL" id="AF325061">
    <property type="protein sequence ID" value="AAG40413.1"/>
    <property type="molecule type" value="mRNA"/>
</dbReference>
<dbReference type="EMBL" id="AY092955">
    <property type="protein sequence ID" value="AAM12954.1"/>
    <property type="molecule type" value="mRNA"/>
</dbReference>
<dbReference type="EMBL" id="AF428440">
    <property type="protein sequence ID" value="AAL16209.1"/>
    <property type="molecule type" value="mRNA"/>
</dbReference>
<dbReference type="EMBL" id="AY052311">
    <property type="protein sequence ID" value="AAK96504.1"/>
    <property type="status" value="ALT_FRAME"/>
    <property type="molecule type" value="mRNA"/>
</dbReference>
<dbReference type="EMBL" id="AY061895">
    <property type="protein sequence ID" value="AAL31222.1"/>
    <property type="status" value="ALT_FRAME"/>
    <property type="molecule type" value="mRNA"/>
</dbReference>
<dbReference type="EMBL" id="AY087703">
    <property type="protein sequence ID" value="AAM65240.1"/>
    <property type="molecule type" value="mRNA"/>
</dbReference>
<dbReference type="EMBL" id="Z17672">
    <property type="protein sequence ID" value="CAA79031.1"/>
    <property type="molecule type" value="mRNA"/>
</dbReference>
<dbReference type="EMBL" id="Z17762">
    <property type="protein sequence ID" value="CAA79057.1"/>
    <property type="molecule type" value="mRNA"/>
</dbReference>
<dbReference type="PIR" id="C86155">
    <property type="entry name" value="C86155"/>
</dbReference>
<dbReference type="PIR" id="JN0131">
    <property type="entry name" value="JN0131"/>
</dbReference>
<dbReference type="RefSeq" id="NP_171751.1">
    <property type="nucleotide sequence ID" value="NM_100131.3"/>
</dbReference>
<dbReference type="RefSeq" id="NP_849577.1">
    <property type="nucleotide sequence ID" value="NM_179246.1"/>
</dbReference>
<dbReference type="PDB" id="6VCX">
    <property type="method" value="X-ray"/>
    <property type="resolution" value="1.10 A"/>
    <property type="chains" value="A=1-393"/>
</dbReference>
<dbReference type="PDB" id="6VCY">
    <property type="method" value="X-ray"/>
    <property type="resolution" value="1.82 A"/>
    <property type="chains" value="A=1-393"/>
</dbReference>
<dbReference type="PDBsum" id="6VCX"/>
<dbReference type="PDBsum" id="6VCY"/>
<dbReference type="SMR" id="P23686"/>
<dbReference type="BioGRID" id="24736">
    <property type="interactions" value="7"/>
</dbReference>
<dbReference type="FunCoup" id="P23686">
    <property type="interactions" value="2967"/>
</dbReference>
<dbReference type="STRING" id="3702.P23686"/>
<dbReference type="iPTMnet" id="P23686"/>
<dbReference type="PaxDb" id="3702-AT1G02500.1"/>
<dbReference type="ProteomicsDB" id="250846"/>
<dbReference type="EnsemblPlants" id="AT1G02500.1">
    <property type="protein sequence ID" value="AT1G02500.1"/>
    <property type="gene ID" value="AT1G02500"/>
</dbReference>
<dbReference type="EnsemblPlants" id="AT1G02500.2">
    <property type="protein sequence ID" value="AT1G02500.2"/>
    <property type="gene ID" value="AT1G02500"/>
</dbReference>
<dbReference type="GeneID" id="839501"/>
<dbReference type="Gramene" id="AT1G02500.1">
    <property type="protein sequence ID" value="AT1G02500.1"/>
    <property type="gene ID" value="AT1G02500"/>
</dbReference>
<dbReference type="Gramene" id="AT1G02500.2">
    <property type="protein sequence ID" value="AT1G02500.2"/>
    <property type="gene ID" value="AT1G02500"/>
</dbReference>
<dbReference type="KEGG" id="ath:AT1G02500"/>
<dbReference type="Araport" id="AT1G02500"/>
<dbReference type="TAIR" id="AT1G02500">
    <property type="gene designation" value="SAM1"/>
</dbReference>
<dbReference type="eggNOG" id="KOG1506">
    <property type="taxonomic scope" value="Eukaryota"/>
</dbReference>
<dbReference type="HOGENOM" id="CLU_041802_0_1_1"/>
<dbReference type="InParanoid" id="P23686"/>
<dbReference type="OMA" id="EYEQHEN"/>
<dbReference type="OrthoDB" id="1502901at2759"/>
<dbReference type="PhylomeDB" id="P23686"/>
<dbReference type="BioCyc" id="ARA:AT1G02500-MONOMER"/>
<dbReference type="BioCyc" id="MetaCyc:AT1G02500-MONOMER"/>
<dbReference type="UniPathway" id="UPA00315">
    <property type="reaction ID" value="UER00080"/>
</dbReference>
<dbReference type="CD-CODE" id="4299E36E">
    <property type="entry name" value="Nucleolus"/>
</dbReference>
<dbReference type="PRO" id="PR:P23686"/>
<dbReference type="Proteomes" id="UP000006548">
    <property type="component" value="Chromosome 1"/>
</dbReference>
<dbReference type="ExpressionAtlas" id="P23686">
    <property type="expression patterns" value="baseline and differential"/>
</dbReference>
<dbReference type="GO" id="GO:0005829">
    <property type="term" value="C:cytosol"/>
    <property type="evidence" value="ECO:0007005"/>
    <property type="project" value="TAIR"/>
</dbReference>
<dbReference type="GO" id="GO:0005576">
    <property type="term" value="C:extracellular region"/>
    <property type="evidence" value="ECO:0007005"/>
    <property type="project" value="TAIR"/>
</dbReference>
<dbReference type="GO" id="GO:0009505">
    <property type="term" value="C:plant-type cell wall"/>
    <property type="evidence" value="ECO:0007005"/>
    <property type="project" value="TAIR"/>
</dbReference>
<dbReference type="GO" id="GO:0005524">
    <property type="term" value="F:ATP binding"/>
    <property type="evidence" value="ECO:0007669"/>
    <property type="project" value="UniProtKB-KW"/>
</dbReference>
<dbReference type="GO" id="GO:0046872">
    <property type="term" value="F:metal ion binding"/>
    <property type="evidence" value="ECO:0007669"/>
    <property type="project" value="UniProtKB-KW"/>
</dbReference>
<dbReference type="GO" id="GO:0004478">
    <property type="term" value="F:methionine adenosyltransferase activity"/>
    <property type="evidence" value="ECO:0000314"/>
    <property type="project" value="CACAO"/>
</dbReference>
<dbReference type="GO" id="GO:0009693">
    <property type="term" value="P:ethylene biosynthetic process"/>
    <property type="evidence" value="ECO:0000304"/>
    <property type="project" value="TAIR"/>
</dbReference>
<dbReference type="GO" id="GO:0006730">
    <property type="term" value="P:one-carbon metabolic process"/>
    <property type="evidence" value="ECO:0007669"/>
    <property type="project" value="UniProtKB-KW"/>
</dbReference>
<dbReference type="GO" id="GO:0006556">
    <property type="term" value="P:S-adenosylmethionine biosynthetic process"/>
    <property type="evidence" value="ECO:0007669"/>
    <property type="project" value="UniProtKB-UniPathway"/>
</dbReference>
<dbReference type="CDD" id="cd18079">
    <property type="entry name" value="S-AdoMet_synt"/>
    <property type="match status" value="1"/>
</dbReference>
<dbReference type="FunFam" id="3.30.300.10:FF:000001">
    <property type="entry name" value="S-adenosylmethionine synthase"/>
    <property type="match status" value="1"/>
</dbReference>
<dbReference type="FunFam" id="3.30.300.10:FF:000003">
    <property type="entry name" value="S-adenosylmethionine synthase"/>
    <property type="match status" value="1"/>
</dbReference>
<dbReference type="FunFam" id="3.30.300.10:FF:000004">
    <property type="entry name" value="S-adenosylmethionine synthase"/>
    <property type="match status" value="1"/>
</dbReference>
<dbReference type="Gene3D" id="3.30.300.10">
    <property type="match status" value="3"/>
</dbReference>
<dbReference type="HAMAP" id="MF_00086">
    <property type="entry name" value="S_AdoMet_synth1"/>
    <property type="match status" value="1"/>
</dbReference>
<dbReference type="InterPro" id="IPR022631">
    <property type="entry name" value="ADOMET_SYNTHASE_CS"/>
</dbReference>
<dbReference type="InterPro" id="IPR022630">
    <property type="entry name" value="S-AdoMet_synt_C"/>
</dbReference>
<dbReference type="InterPro" id="IPR022629">
    <property type="entry name" value="S-AdoMet_synt_central"/>
</dbReference>
<dbReference type="InterPro" id="IPR022628">
    <property type="entry name" value="S-AdoMet_synt_N"/>
</dbReference>
<dbReference type="InterPro" id="IPR002133">
    <property type="entry name" value="S-AdoMet_synthetase"/>
</dbReference>
<dbReference type="InterPro" id="IPR022636">
    <property type="entry name" value="S-AdoMet_synthetase_sfam"/>
</dbReference>
<dbReference type="NCBIfam" id="TIGR01034">
    <property type="entry name" value="metK"/>
    <property type="match status" value="1"/>
</dbReference>
<dbReference type="PANTHER" id="PTHR11964">
    <property type="entry name" value="S-ADENOSYLMETHIONINE SYNTHETASE"/>
    <property type="match status" value="1"/>
</dbReference>
<dbReference type="Pfam" id="PF02773">
    <property type="entry name" value="S-AdoMet_synt_C"/>
    <property type="match status" value="1"/>
</dbReference>
<dbReference type="Pfam" id="PF02772">
    <property type="entry name" value="S-AdoMet_synt_M"/>
    <property type="match status" value="1"/>
</dbReference>
<dbReference type="Pfam" id="PF00438">
    <property type="entry name" value="S-AdoMet_synt_N"/>
    <property type="match status" value="1"/>
</dbReference>
<dbReference type="PIRSF" id="PIRSF000497">
    <property type="entry name" value="MAT"/>
    <property type="match status" value="1"/>
</dbReference>
<dbReference type="SUPFAM" id="SSF55973">
    <property type="entry name" value="S-adenosylmethionine synthetase"/>
    <property type="match status" value="3"/>
</dbReference>
<dbReference type="PROSITE" id="PS00376">
    <property type="entry name" value="ADOMET_SYNTHASE_1"/>
    <property type="match status" value="1"/>
</dbReference>
<dbReference type="PROSITE" id="PS00377">
    <property type="entry name" value="ADOMET_SYNTHASE_2"/>
    <property type="match status" value="1"/>
</dbReference>